<organism>
    <name type="scientific">Shewanella baltica (strain OS223)</name>
    <dbReference type="NCBI Taxonomy" id="407976"/>
    <lineage>
        <taxon>Bacteria</taxon>
        <taxon>Pseudomonadati</taxon>
        <taxon>Pseudomonadota</taxon>
        <taxon>Gammaproteobacteria</taxon>
        <taxon>Alteromonadales</taxon>
        <taxon>Shewanellaceae</taxon>
        <taxon>Shewanella</taxon>
    </lineage>
</organism>
<keyword id="KW-0574">Periplasm</keyword>
<keyword id="KW-0732">Signal</keyword>
<evidence type="ECO:0000255" key="1">
    <source>
        <dbReference type="HAMAP-Rule" id="MF_00780"/>
    </source>
</evidence>
<gene>
    <name type="ordered locus">Sbal223_1323</name>
</gene>
<comment type="subcellular location">
    <subcellularLocation>
        <location evidence="1">Periplasm</location>
    </subcellularLocation>
</comment>
<comment type="similarity">
    <text evidence="1">Belongs to the UPF0312 family. Type 1 subfamily.</text>
</comment>
<dbReference type="EMBL" id="CP001252">
    <property type="protein sequence ID" value="ACK45831.1"/>
    <property type="molecule type" value="Genomic_DNA"/>
</dbReference>
<dbReference type="RefSeq" id="WP_006082533.1">
    <property type="nucleotide sequence ID" value="NC_011663.1"/>
</dbReference>
<dbReference type="SMR" id="B8E915"/>
<dbReference type="KEGG" id="sbp:Sbal223_1323"/>
<dbReference type="HOGENOM" id="CLU_071003_1_2_6"/>
<dbReference type="Proteomes" id="UP000002507">
    <property type="component" value="Chromosome"/>
</dbReference>
<dbReference type="GO" id="GO:0042597">
    <property type="term" value="C:periplasmic space"/>
    <property type="evidence" value="ECO:0007669"/>
    <property type="project" value="UniProtKB-SubCell"/>
</dbReference>
<dbReference type="Gene3D" id="2.40.128.110">
    <property type="entry name" value="Lipid/polyisoprenoid-binding, YceI-like"/>
    <property type="match status" value="1"/>
</dbReference>
<dbReference type="HAMAP" id="MF_00780">
    <property type="entry name" value="UPF0312"/>
    <property type="match status" value="1"/>
</dbReference>
<dbReference type="InterPro" id="IPR007372">
    <property type="entry name" value="Lipid/polyisoprenoid-bd_YceI"/>
</dbReference>
<dbReference type="InterPro" id="IPR036761">
    <property type="entry name" value="TTHA0802/YceI-like_sf"/>
</dbReference>
<dbReference type="InterPro" id="IPR023480">
    <property type="entry name" value="UPF0312/YceI"/>
</dbReference>
<dbReference type="NCBIfam" id="NF002994">
    <property type="entry name" value="PRK03757.1"/>
    <property type="match status" value="1"/>
</dbReference>
<dbReference type="PANTHER" id="PTHR34406">
    <property type="entry name" value="PROTEIN YCEI"/>
    <property type="match status" value="1"/>
</dbReference>
<dbReference type="PANTHER" id="PTHR34406:SF1">
    <property type="entry name" value="PROTEIN YCEI"/>
    <property type="match status" value="1"/>
</dbReference>
<dbReference type="Pfam" id="PF04264">
    <property type="entry name" value="YceI"/>
    <property type="match status" value="1"/>
</dbReference>
<dbReference type="SMART" id="SM00867">
    <property type="entry name" value="YceI"/>
    <property type="match status" value="1"/>
</dbReference>
<dbReference type="SUPFAM" id="SSF101874">
    <property type="entry name" value="YceI-like"/>
    <property type="match status" value="1"/>
</dbReference>
<reference key="1">
    <citation type="submission" date="2008-12" db="EMBL/GenBank/DDBJ databases">
        <title>Complete sequence of chromosome of Shewanella baltica OS223.</title>
        <authorList>
            <consortium name="US DOE Joint Genome Institute"/>
            <person name="Lucas S."/>
            <person name="Copeland A."/>
            <person name="Lapidus A."/>
            <person name="Glavina del Rio T."/>
            <person name="Dalin E."/>
            <person name="Tice H."/>
            <person name="Bruce D."/>
            <person name="Goodwin L."/>
            <person name="Pitluck S."/>
            <person name="Chertkov O."/>
            <person name="Meincke L."/>
            <person name="Brettin T."/>
            <person name="Detter J.C."/>
            <person name="Han C."/>
            <person name="Kuske C.R."/>
            <person name="Larimer F."/>
            <person name="Land M."/>
            <person name="Hauser L."/>
            <person name="Kyrpides N."/>
            <person name="Ovchinnikova G."/>
            <person name="Brettar I."/>
            <person name="Rodrigues J."/>
            <person name="Konstantinidis K."/>
            <person name="Tiedje J."/>
        </authorList>
    </citation>
    <scope>NUCLEOTIDE SEQUENCE [LARGE SCALE GENOMIC DNA]</scope>
    <source>
        <strain>OS223</strain>
    </source>
</reference>
<feature type="signal peptide" evidence="1">
    <location>
        <begin position="1"/>
        <end position="22"/>
    </location>
</feature>
<feature type="chain" id="PRO_5000423935" description="UPF0312 protein Sbal223_1323">
    <location>
        <begin position="23"/>
        <end position="191"/>
    </location>
</feature>
<proteinExistence type="inferred from homology"/>
<protein>
    <recommendedName>
        <fullName evidence="1">UPF0312 protein Sbal223_1323</fullName>
    </recommendedName>
</protein>
<sequence>MKKQLLSALIGASLLAPMAASAADYVIDREGAHASITFKVSHLGYSYVVGRFNDFSGDFSYDAAKPTAAKVNVTVNTLSVDSNHAERDKHIRSADFLNTSKFAQATFTSTTVEDKGNGDLVINGNLTLNGVTKPLAINAHAVGEGQDPWGGYRAGFTGTTTFAMKDFGIKMDLGPASSHVELDLVVEGVRK</sequence>
<name>Y1323_SHEB2</name>
<accession>B8E915</accession>